<gene>
    <name type="primary">SFH11</name>
    <name type="ordered locus">At5g47510</name>
    <name type="ORF">MNJ7.10</name>
</gene>
<feature type="chain" id="PRO_0000423471" description="Phosphatidylinositol/phosphatidylcholine transfer protein SFH11">
    <location>
        <begin position="1"/>
        <end position="376"/>
    </location>
</feature>
<feature type="domain" description="CRAL-TRIO" evidence="3">
    <location>
        <begin position="92"/>
        <end position="266"/>
    </location>
</feature>
<feature type="region of interest" description="Disordered" evidence="4">
    <location>
        <begin position="1"/>
        <end position="24"/>
    </location>
</feature>
<feature type="coiled-coil region" evidence="2">
    <location>
        <begin position="323"/>
        <end position="357"/>
    </location>
</feature>
<feature type="compositionally biased region" description="Basic and acidic residues" evidence="4">
    <location>
        <begin position="1"/>
        <end position="20"/>
    </location>
</feature>
<proteinExistence type="inferred from homology"/>
<name>SFH11_ARATH</name>
<organism>
    <name type="scientific">Arabidopsis thaliana</name>
    <name type="common">Mouse-ear cress</name>
    <dbReference type="NCBI Taxonomy" id="3702"/>
    <lineage>
        <taxon>Eukaryota</taxon>
        <taxon>Viridiplantae</taxon>
        <taxon>Streptophyta</taxon>
        <taxon>Embryophyta</taxon>
        <taxon>Tracheophyta</taxon>
        <taxon>Spermatophyta</taxon>
        <taxon>Magnoliopsida</taxon>
        <taxon>eudicotyledons</taxon>
        <taxon>Gunneridae</taxon>
        <taxon>Pentapetalae</taxon>
        <taxon>rosids</taxon>
        <taxon>malvids</taxon>
        <taxon>Brassicales</taxon>
        <taxon>Brassicaceae</taxon>
        <taxon>Camelineae</taxon>
        <taxon>Arabidopsis</taxon>
    </lineage>
</organism>
<protein>
    <recommendedName>
        <fullName>Phosphatidylinositol/phosphatidylcholine transfer protein SFH11</fullName>
    </recommendedName>
    <alternativeName>
        <fullName>Protein SEC FOURTEEN HOMOLOGS 11</fullName>
        <shortName>AtSFH11</shortName>
    </alternativeName>
</protein>
<sequence>MQETDRDIHISDGTMNKEEQSPNNEEMVEAFRNLLLLHGHLPDKHGDHNTLRRFLKMRDFDLEKSKEAFLNYMKWRVDYKVDLISQKFKFEEYGEVKKHYPHGFHKVDKTGRPIYIERLGMTDLNAFLKATTIERYVNYHIKEQEKTMSLRYPACSIASDKHVSSTTTILDVSGVGMSNFSKPARSLFMEIQKIDSNYYPETLHRLFVVNASSGFRMLWLALKTFLDARTLAKVQVLGPNYLGELLEAIEPSNLPTFLGGNCTCSDHGGCLFSDEGPWNDPGIKEKIEEPSTIEDAHSETMDKVSENAPANQKESLGEVMITMEKYAALKTAVKDSQKRIEMLEISLHETKKVLNGLAEIIEAIQPNQPITKCKPV</sequence>
<accession>F4JYJ3</accession>
<accession>Q9FGK6</accession>
<dbReference type="EMBL" id="AB025628">
    <property type="protein sequence ID" value="BAB09077.1"/>
    <property type="status" value="ALT_SEQ"/>
    <property type="molecule type" value="Genomic_DNA"/>
</dbReference>
<dbReference type="EMBL" id="CP002688">
    <property type="protein sequence ID" value="AED95527.1"/>
    <property type="molecule type" value="Genomic_DNA"/>
</dbReference>
<dbReference type="RefSeq" id="NP_199562.2">
    <property type="nucleotide sequence ID" value="NM_124124.3"/>
</dbReference>
<dbReference type="SMR" id="F4JYJ3"/>
<dbReference type="FunCoup" id="F4JYJ3">
    <property type="interactions" value="511"/>
</dbReference>
<dbReference type="STRING" id="3702.F4JYJ3"/>
<dbReference type="PaxDb" id="3702-AT5G47510.1"/>
<dbReference type="ProteomicsDB" id="234553"/>
<dbReference type="EnsemblPlants" id="AT5G47510.1">
    <property type="protein sequence ID" value="AT5G47510.1"/>
    <property type="gene ID" value="AT5G47510"/>
</dbReference>
<dbReference type="GeneID" id="834801"/>
<dbReference type="Gramene" id="AT5G47510.1">
    <property type="protein sequence ID" value="AT5G47510.1"/>
    <property type="gene ID" value="AT5G47510"/>
</dbReference>
<dbReference type="KEGG" id="ath:AT5G47510"/>
<dbReference type="Araport" id="AT5G47510"/>
<dbReference type="TAIR" id="AT5G47510"/>
<dbReference type="eggNOG" id="KOG1471">
    <property type="taxonomic scope" value="Eukaryota"/>
</dbReference>
<dbReference type="HOGENOM" id="CLU_014001_6_1_1"/>
<dbReference type="InParanoid" id="F4JYJ3"/>
<dbReference type="PRO" id="PR:F4JYJ3"/>
<dbReference type="Proteomes" id="UP000006548">
    <property type="component" value="Chromosome 5"/>
</dbReference>
<dbReference type="ExpressionAtlas" id="F4JYJ3">
    <property type="expression patterns" value="baseline and differential"/>
</dbReference>
<dbReference type="GO" id="GO:0000139">
    <property type="term" value="C:Golgi membrane"/>
    <property type="evidence" value="ECO:0007669"/>
    <property type="project" value="UniProtKB-SubCell"/>
</dbReference>
<dbReference type="GO" id="GO:0005886">
    <property type="term" value="C:plasma membrane"/>
    <property type="evidence" value="ECO:0007669"/>
    <property type="project" value="UniProtKB-SubCell"/>
</dbReference>
<dbReference type="GO" id="GO:0015031">
    <property type="term" value="P:protein transport"/>
    <property type="evidence" value="ECO:0007669"/>
    <property type="project" value="UniProtKB-KW"/>
</dbReference>
<dbReference type="CDD" id="cd00170">
    <property type="entry name" value="SEC14"/>
    <property type="match status" value="1"/>
</dbReference>
<dbReference type="Gene3D" id="3.40.525.10">
    <property type="entry name" value="CRAL-TRIO lipid binding domain"/>
    <property type="match status" value="1"/>
</dbReference>
<dbReference type="Gene3D" id="1.10.8.20">
    <property type="entry name" value="N-terminal domain of phosphatidylinositol transfer protein sec14p"/>
    <property type="match status" value="1"/>
</dbReference>
<dbReference type="InterPro" id="IPR001251">
    <property type="entry name" value="CRAL-TRIO_dom"/>
</dbReference>
<dbReference type="InterPro" id="IPR036865">
    <property type="entry name" value="CRAL-TRIO_dom_sf"/>
</dbReference>
<dbReference type="InterPro" id="IPR011074">
    <property type="entry name" value="CRAL/TRIO_N_dom"/>
</dbReference>
<dbReference type="InterPro" id="IPR036273">
    <property type="entry name" value="CRAL/TRIO_N_dom_sf"/>
</dbReference>
<dbReference type="InterPro" id="IPR051026">
    <property type="entry name" value="PI/PC_transfer"/>
</dbReference>
<dbReference type="PANTHER" id="PTHR45657">
    <property type="entry name" value="CRAL-TRIO DOMAIN-CONTAINING PROTEIN YKL091C-RELATED"/>
    <property type="match status" value="1"/>
</dbReference>
<dbReference type="PANTHER" id="PTHR45657:SF50">
    <property type="entry name" value="PHOSPHATIDYLINOSITOL_PHOSPHATIDYLCHOLINE TRANSFER PROTEIN SFH11"/>
    <property type="match status" value="1"/>
</dbReference>
<dbReference type="Pfam" id="PF00650">
    <property type="entry name" value="CRAL_TRIO"/>
    <property type="match status" value="1"/>
</dbReference>
<dbReference type="SMART" id="SM01100">
    <property type="entry name" value="CRAL_TRIO_N"/>
    <property type="match status" value="1"/>
</dbReference>
<dbReference type="SMART" id="SM00516">
    <property type="entry name" value="SEC14"/>
    <property type="match status" value="1"/>
</dbReference>
<dbReference type="SUPFAM" id="SSF52087">
    <property type="entry name" value="CRAL/TRIO domain"/>
    <property type="match status" value="1"/>
</dbReference>
<dbReference type="SUPFAM" id="SSF46938">
    <property type="entry name" value="CRAL/TRIO N-terminal domain"/>
    <property type="match status" value="1"/>
</dbReference>
<dbReference type="PROSITE" id="PS50191">
    <property type="entry name" value="CRAL_TRIO"/>
    <property type="match status" value="1"/>
</dbReference>
<keyword id="KW-1003">Cell membrane</keyword>
<keyword id="KW-0175">Coiled coil</keyword>
<keyword id="KW-0333">Golgi apparatus</keyword>
<keyword id="KW-0472">Membrane</keyword>
<keyword id="KW-0653">Protein transport</keyword>
<keyword id="KW-1185">Reference proteome</keyword>
<keyword id="KW-0813">Transport</keyword>
<reference key="1">
    <citation type="submission" date="1999-04" db="EMBL/GenBank/DDBJ databases">
        <title>Structural analysis of Arabidopsis thaliana chromosome 5. XI.</title>
        <authorList>
            <person name="Kaneko T."/>
            <person name="Katoh T."/>
            <person name="Asamizu E."/>
            <person name="Sato S."/>
            <person name="Nakamura Y."/>
            <person name="Kotani H."/>
            <person name="Tabata S."/>
        </authorList>
    </citation>
    <scope>NUCLEOTIDE SEQUENCE [LARGE SCALE GENOMIC DNA]</scope>
    <source>
        <strain>cv. Columbia</strain>
    </source>
</reference>
<reference key="2">
    <citation type="journal article" date="2017" name="Plant J.">
        <title>Araport11: a complete reannotation of the Arabidopsis thaliana reference genome.</title>
        <authorList>
            <person name="Cheng C.Y."/>
            <person name="Krishnakumar V."/>
            <person name="Chan A.P."/>
            <person name="Thibaud-Nissen F."/>
            <person name="Schobel S."/>
            <person name="Town C.D."/>
        </authorList>
    </citation>
    <scope>GENOME REANNOTATION</scope>
    <source>
        <strain>cv. Columbia</strain>
    </source>
</reference>
<reference key="3">
    <citation type="journal article" date="2005" name="J. Cell Biol.">
        <title>A Sec14p-nodulin domain phosphatidylinositol transfer protein polarizes membrane growth of Arabidopsis thaliana root hairs.</title>
        <authorList>
            <person name="Vincent P."/>
            <person name="Chua M."/>
            <person name="Nogue F."/>
            <person name="Fairbrother A."/>
            <person name="Mekeel H."/>
            <person name="Xu Y."/>
            <person name="Allen N."/>
            <person name="Bibikova T.N."/>
            <person name="Gilroy S."/>
            <person name="Bankaitis V.A."/>
        </authorList>
    </citation>
    <scope>GENE FAMILY</scope>
</reference>
<reference key="4">
    <citation type="journal article" date="2006" name="Nat. Chem. Biol.">
        <title>Phosphatidylinositol transfer proteins and cellular nanoreactors for lipid signaling.</title>
        <authorList>
            <person name="Ile K.E."/>
            <person name="Schaaf G."/>
            <person name="Bankaitis V.A."/>
        </authorList>
    </citation>
    <scope>REVIEW</scope>
</reference>
<evidence type="ECO:0000250" key="1"/>
<evidence type="ECO:0000255" key="2"/>
<evidence type="ECO:0000255" key="3">
    <source>
        <dbReference type="PROSITE-ProRule" id="PRU00056"/>
    </source>
</evidence>
<evidence type="ECO:0000256" key="4">
    <source>
        <dbReference type="SAM" id="MobiDB-lite"/>
    </source>
</evidence>
<evidence type="ECO:0000305" key="5"/>
<comment type="function">
    <text evidence="1">Required for transport of secretory proteins from the Golgi complex. Catalyzes the transfer of phosphatidylinositol and phosphatidylcholine between membranes in vitro (By similarity).</text>
</comment>
<comment type="subcellular location">
    <subcellularLocation>
        <location evidence="1">Golgi apparatus membrane</location>
        <topology evidence="1">Peripheral membrane protein</topology>
    </subcellularLocation>
    <subcellularLocation>
        <location evidence="1">Cell membrane</location>
        <topology evidence="1">Peripheral membrane protein</topology>
    </subcellularLocation>
</comment>
<comment type="similarity">
    <text evidence="5">Belongs to the SFH family.</text>
</comment>
<comment type="sequence caution" evidence="5">
    <conflict type="erroneous gene model prediction">
        <sequence resource="EMBL-CDS" id="BAB09077"/>
    </conflict>
</comment>